<dbReference type="EMBL" id="CP001120">
    <property type="protein sequence ID" value="ACF66424.1"/>
    <property type="molecule type" value="Genomic_DNA"/>
</dbReference>
<dbReference type="RefSeq" id="WP_000185218.1">
    <property type="nucleotide sequence ID" value="NC_011083.1"/>
</dbReference>
<dbReference type="SMR" id="B4TKP8"/>
<dbReference type="KEGG" id="seh:SeHA_C3778"/>
<dbReference type="HOGENOM" id="CLU_056916_0_0_6"/>
<dbReference type="Proteomes" id="UP000001866">
    <property type="component" value="Chromosome"/>
</dbReference>
<dbReference type="GO" id="GO:0005886">
    <property type="term" value="C:plasma membrane"/>
    <property type="evidence" value="ECO:0007669"/>
    <property type="project" value="UniProtKB-SubCell"/>
</dbReference>
<dbReference type="GO" id="GO:0022857">
    <property type="term" value="F:transmembrane transporter activity"/>
    <property type="evidence" value="ECO:0007669"/>
    <property type="project" value="InterPro"/>
</dbReference>
<dbReference type="FunFam" id="1.20.1250.20:FF:000032">
    <property type="entry name" value="Protein TsgA"/>
    <property type="match status" value="1"/>
</dbReference>
<dbReference type="FunFam" id="1.20.1250.20:FF:000052">
    <property type="entry name" value="Protein TsgA"/>
    <property type="match status" value="1"/>
</dbReference>
<dbReference type="Gene3D" id="1.20.1250.20">
    <property type="entry name" value="MFS general substrate transporter like domains"/>
    <property type="match status" value="2"/>
</dbReference>
<dbReference type="HAMAP" id="MF_01044">
    <property type="entry name" value="MFS_TsgA"/>
    <property type="match status" value="1"/>
</dbReference>
<dbReference type="InterPro" id="IPR011701">
    <property type="entry name" value="MFS"/>
</dbReference>
<dbReference type="InterPro" id="IPR020846">
    <property type="entry name" value="MFS_dom"/>
</dbReference>
<dbReference type="InterPro" id="IPR036259">
    <property type="entry name" value="MFS_trans_sf"/>
</dbReference>
<dbReference type="InterPro" id="IPR023528">
    <property type="entry name" value="MFS_TsgA"/>
</dbReference>
<dbReference type="InterPro" id="IPR050375">
    <property type="entry name" value="MFS_TsgA-like"/>
</dbReference>
<dbReference type="NCBIfam" id="NF002982">
    <property type="entry name" value="PRK03699.1"/>
    <property type="match status" value="1"/>
</dbReference>
<dbReference type="PANTHER" id="PTHR43702">
    <property type="entry name" value="L-FUCOSE-PROTON SYMPORTER"/>
    <property type="match status" value="1"/>
</dbReference>
<dbReference type="PANTHER" id="PTHR43702:SF3">
    <property type="entry name" value="PROTEIN TSGA"/>
    <property type="match status" value="1"/>
</dbReference>
<dbReference type="Pfam" id="PF07690">
    <property type="entry name" value="MFS_1"/>
    <property type="match status" value="1"/>
</dbReference>
<dbReference type="SUPFAM" id="SSF103473">
    <property type="entry name" value="MFS general substrate transporter"/>
    <property type="match status" value="1"/>
</dbReference>
<dbReference type="PROSITE" id="PS50850">
    <property type="entry name" value="MFS"/>
    <property type="match status" value="1"/>
</dbReference>
<keyword id="KW-0997">Cell inner membrane</keyword>
<keyword id="KW-1003">Cell membrane</keyword>
<keyword id="KW-0472">Membrane</keyword>
<keyword id="KW-0812">Transmembrane</keyword>
<keyword id="KW-1133">Transmembrane helix</keyword>
<sequence length="393" mass="43146">MTNSNRIKLTWISFLSYALTGALVIVTGMVMGNIADYFHLPVSSMSNTFTFLNAGILISIFLNAWLMEIVPLKTQLRFGFILMVLAVAGLMFSHSLALFSAAMFVLGLVSGITMSIGTFLITQLYEGRQRGSRLLFTDSFFSMAGMIFPMVAAFLLARSIEWYWVYACIGLVYLAIFILTFGCEFPALGKHAQHSQAPVVKEKWGIGVLFLAVAALCYILGQLGFISWVPEYAKGLGMSLNDAGALVSDFWMSYMFGMWAFSFILRFFDLQRILTVLAGMAAVLMYLFITGTQAHMPWFILTLGFFSSAIYTSIITLGSQQTKVASPKLVNFILTCGTIGTMLTFVVTGPIVAHSGPQAALLTANGLYAVVFVMCFALGFVSRHRQHSAPATH</sequence>
<accession>B4TKP8</accession>
<evidence type="ECO:0000255" key="1">
    <source>
        <dbReference type="HAMAP-Rule" id="MF_01044"/>
    </source>
</evidence>
<name>TSGA_SALHS</name>
<feature type="chain" id="PRO_1000136149" description="Protein TsgA">
    <location>
        <begin position="1"/>
        <end position="393"/>
    </location>
</feature>
<feature type="transmembrane region" description="Helical" evidence="1">
    <location>
        <begin position="11"/>
        <end position="31"/>
    </location>
</feature>
<feature type="transmembrane region" description="Helical" evidence="1">
    <location>
        <begin position="51"/>
        <end position="71"/>
    </location>
</feature>
<feature type="transmembrane region" description="Helical" evidence="1">
    <location>
        <begin position="78"/>
        <end position="98"/>
    </location>
</feature>
<feature type="transmembrane region" description="Helical" evidence="1">
    <location>
        <begin position="101"/>
        <end position="121"/>
    </location>
</feature>
<feature type="transmembrane region" description="Helical" evidence="1">
    <location>
        <begin position="134"/>
        <end position="154"/>
    </location>
</feature>
<feature type="transmembrane region" description="Helical" evidence="1">
    <location>
        <begin position="162"/>
        <end position="182"/>
    </location>
</feature>
<feature type="transmembrane region" description="Helical" evidence="1">
    <location>
        <begin position="206"/>
        <end position="226"/>
    </location>
</feature>
<feature type="transmembrane region" description="Helical" evidence="1">
    <location>
        <begin position="245"/>
        <end position="265"/>
    </location>
</feature>
<feature type="transmembrane region" description="Helical" evidence="1">
    <location>
        <begin position="273"/>
        <end position="293"/>
    </location>
</feature>
<feature type="transmembrane region" description="Helical" evidence="1">
    <location>
        <begin position="298"/>
        <end position="318"/>
    </location>
</feature>
<feature type="transmembrane region" description="Helical" evidence="1">
    <location>
        <begin position="332"/>
        <end position="352"/>
    </location>
</feature>
<feature type="transmembrane region" description="Helical" evidence="1">
    <location>
        <begin position="361"/>
        <end position="381"/>
    </location>
</feature>
<organism>
    <name type="scientific">Salmonella heidelberg (strain SL476)</name>
    <dbReference type="NCBI Taxonomy" id="454169"/>
    <lineage>
        <taxon>Bacteria</taxon>
        <taxon>Pseudomonadati</taxon>
        <taxon>Pseudomonadota</taxon>
        <taxon>Gammaproteobacteria</taxon>
        <taxon>Enterobacterales</taxon>
        <taxon>Enterobacteriaceae</taxon>
        <taxon>Salmonella</taxon>
    </lineage>
</organism>
<gene>
    <name evidence="1" type="primary">tsgA</name>
    <name type="ordered locus">SeHA_C3778</name>
</gene>
<protein>
    <recommendedName>
        <fullName evidence="1">Protein TsgA</fullName>
    </recommendedName>
</protein>
<proteinExistence type="inferred from homology"/>
<comment type="subcellular location">
    <subcellularLocation>
        <location evidence="1">Cell inner membrane</location>
        <topology evidence="1">Multi-pass membrane protein</topology>
    </subcellularLocation>
</comment>
<comment type="similarity">
    <text evidence="1">Belongs to the major facilitator superfamily. TsgA family.</text>
</comment>
<reference key="1">
    <citation type="journal article" date="2011" name="J. Bacteriol.">
        <title>Comparative genomics of 28 Salmonella enterica isolates: evidence for CRISPR-mediated adaptive sublineage evolution.</title>
        <authorList>
            <person name="Fricke W.F."/>
            <person name="Mammel M.K."/>
            <person name="McDermott P.F."/>
            <person name="Tartera C."/>
            <person name="White D.G."/>
            <person name="Leclerc J.E."/>
            <person name="Ravel J."/>
            <person name="Cebula T.A."/>
        </authorList>
    </citation>
    <scope>NUCLEOTIDE SEQUENCE [LARGE SCALE GENOMIC DNA]</scope>
    <source>
        <strain>SL476</strain>
    </source>
</reference>